<name>PUR2_PASMU</name>
<accession>P57829</accession>
<dbReference type="EC" id="6.3.4.13" evidence="2"/>
<dbReference type="EMBL" id="AE004439">
    <property type="protein sequence ID" value="AAK02308.1"/>
    <property type="molecule type" value="Genomic_DNA"/>
</dbReference>
<dbReference type="RefSeq" id="WP_005723617.1">
    <property type="nucleotide sequence ID" value="NC_002663.1"/>
</dbReference>
<dbReference type="SMR" id="P57829"/>
<dbReference type="STRING" id="272843.PM0224"/>
<dbReference type="EnsemblBacteria" id="AAK02308">
    <property type="protein sequence ID" value="AAK02308"/>
    <property type="gene ID" value="PM0224"/>
</dbReference>
<dbReference type="KEGG" id="pmu:PM0224"/>
<dbReference type="PATRIC" id="fig|272843.6.peg.232"/>
<dbReference type="HOGENOM" id="CLU_027420_3_1_6"/>
<dbReference type="OrthoDB" id="9807240at2"/>
<dbReference type="UniPathway" id="UPA00074">
    <property type="reaction ID" value="UER00125"/>
</dbReference>
<dbReference type="Proteomes" id="UP000000809">
    <property type="component" value="Chromosome"/>
</dbReference>
<dbReference type="GO" id="GO:0005524">
    <property type="term" value="F:ATP binding"/>
    <property type="evidence" value="ECO:0007669"/>
    <property type="project" value="UniProtKB-KW"/>
</dbReference>
<dbReference type="GO" id="GO:0046872">
    <property type="term" value="F:metal ion binding"/>
    <property type="evidence" value="ECO:0007669"/>
    <property type="project" value="UniProtKB-KW"/>
</dbReference>
<dbReference type="GO" id="GO:0004637">
    <property type="term" value="F:phosphoribosylamine-glycine ligase activity"/>
    <property type="evidence" value="ECO:0007669"/>
    <property type="project" value="UniProtKB-UniRule"/>
</dbReference>
<dbReference type="GO" id="GO:0006189">
    <property type="term" value="P:'de novo' IMP biosynthetic process"/>
    <property type="evidence" value="ECO:0007669"/>
    <property type="project" value="UniProtKB-UniRule"/>
</dbReference>
<dbReference type="GO" id="GO:0009113">
    <property type="term" value="P:purine nucleobase biosynthetic process"/>
    <property type="evidence" value="ECO:0007669"/>
    <property type="project" value="InterPro"/>
</dbReference>
<dbReference type="FunFam" id="3.30.470.20:FF:000031">
    <property type="entry name" value="Phosphoribosylamine--glycine ligase"/>
    <property type="match status" value="1"/>
</dbReference>
<dbReference type="FunFam" id="3.40.50.20:FF:000006">
    <property type="entry name" value="Phosphoribosylamine--glycine ligase, chloroplastic"/>
    <property type="match status" value="1"/>
</dbReference>
<dbReference type="FunFam" id="3.30.1490.20:FF:000006">
    <property type="entry name" value="phosphoribosylamine--glycine ligase, chloroplastic-like"/>
    <property type="match status" value="1"/>
</dbReference>
<dbReference type="FunFam" id="3.90.600.10:FF:000001">
    <property type="entry name" value="Trifunctional purine biosynthetic protein adenosine-3"/>
    <property type="match status" value="1"/>
</dbReference>
<dbReference type="Gene3D" id="3.40.50.20">
    <property type="match status" value="1"/>
</dbReference>
<dbReference type="Gene3D" id="3.30.1490.20">
    <property type="entry name" value="ATP-grasp fold, A domain"/>
    <property type="match status" value="1"/>
</dbReference>
<dbReference type="Gene3D" id="3.30.470.20">
    <property type="entry name" value="ATP-grasp fold, B domain"/>
    <property type="match status" value="1"/>
</dbReference>
<dbReference type="Gene3D" id="3.90.600.10">
    <property type="entry name" value="Phosphoribosylglycinamide synthetase, C-terminal domain"/>
    <property type="match status" value="1"/>
</dbReference>
<dbReference type="HAMAP" id="MF_00138">
    <property type="entry name" value="GARS"/>
    <property type="match status" value="1"/>
</dbReference>
<dbReference type="InterPro" id="IPR011761">
    <property type="entry name" value="ATP-grasp"/>
</dbReference>
<dbReference type="InterPro" id="IPR013815">
    <property type="entry name" value="ATP_grasp_subdomain_1"/>
</dbReference>
<dbReference type="InterPro" id="IPR016185">
    <property type="entry name" value="PreATP-grasp_dom_sf"/>
</dbReference>
<dbReference type="InterPro" id="IPR020561">
    <property type="entry name" value="PRibGlycinamid_synth_ATP-grasp"/>
</dbReference>
<dbReference type="InterPro" id="IPR000115">
    <property type="entry name" value="PRibGlycinamide_synth"/>
</dbReference>
<dbReference type="InterPro" id="IPR020560">
    <property type="entry name" value="PRibGlycinamide_synth_C-dom"/>
</dbReference>
<dbReference type="InterPro" id="IPR037123">
    <property type="entry name" value="PRibGlycinamide_synth_C_sf"/>
</dbReference>
<dbReference type="InterPro" id="IPR020559">
    <property type="entry name" value="PRibGlycinamide_synth_CS"/>
</dbReference>
<dbReference type="InterPro" id="IPR020562">
    <property type="entry name" value="PRibGlycinamide_synth_N"/>
</dbReference>
<dbReference type="InterPro" id="IPR011054">
    <property type="entry name" value="Rudment_hybrid_motif"/>
</dbReference>
<dbReference type="NCBIfam" id="TIGR00877">
    <property type="entry name" value="purD"/>
    <property type="match status" value="1"/>
</dbReference>
<dbReference type="PANTHER" id="PTHR43472">
    <property type="entry name" value="PHOSPHORIBOSYLAMINE--GLYCINE LIGASE"/>
    <property type="match status" value="1"/>
</dbReference>
<dbReference type="PANTHER" id="PTHR43472:SF1">
    <property type="entry name" value="PHOSPHORIBOSYLAMINE--GLYCINE LIGASE, CHLOROPLASTIC"/>
    <property type="match status" value="1"/>
</dbReference>
<dbReference type="Pfam" id="PF01071">
    <property type="entry name" value="GARS_A"/>
    <property type="match status" value="1"/>
</dbReference>
<dbReference type="Pfam" id="PF02843">
    <property type="entry name" value="GARS_C"/>
    <property type="match status" value="1"/>
</dbReference>
<dbReference type="Pfam" id="PF02844">
    <property type="entry name" value="GARS_N"/>
    <property type="match status" value="1"/>
</dbReference>
<dbReference type="SMART" id="SM01209">
    <property type="entry name" value="GARS_A"/>
    <property type="match status" value="1"/>
</dbReference>
<dbReference type="SMART" id="SM01210">
    <property type="entry name" value="GARS_C"/>
    <property type="match status" value="1"/>
</dbReference>
<dbReference type="SUPFAM" id="SSF56059">
    <property type="entry name" value="Glutathione synthetase ATP-binding domain-like"/>
    <property type="match status" value="1"/>
</dbReference>
<dbReference type="SUPFAM" id="SSF52440">
    <property type="entry name" value="PreATP-grasp domain"/>
    <property type="match status" value="1"/>
</dbReference>
<dbReference type="SUPFAM" id="SSF51246">
    <property type="entry name" value="Rudiment single hybrid motif"/>
    <property type="match status" value="1"/>
</dbReference>
<dbReference type="PROSITE" id="PS50975">
    <property type="entry name" value="ATP_GRASP"/>
    <property type="match status" value="1"/>
</dbReference>
<dbReference type="PROSITE" id="PS00184">
    <property type="entry name" value="GARS"/>
    <property type="match status" value="1"/>
</dbReference>
<comment type="catalytic activity">
    <reaction evidence="2">
        <text>5-phospho-beta-D-ribosylamine + glycine + ATP = N(1)-(5-phospho-beta-D-ribosyl)glycinamide + ADP + phosphate + H(+)</text>
        <dbReference type="Rhea" id="RHEA:17453"/>
        <dbReference type="ChEBI" id="CHEBI:15378"/>
        <dbReference type="ChEBI" id="CHEBI:30616"/>
        <dbReference type="ChEBI" id="CHEBI:43474"/>
        <dbReference type="ChEBI" id="CHEBI:57305"/>
        <dbReference type="ChEBI" id="CHEBI:58681"/>
        <dbReference type="ChEBI" id="CHEBI:143788"/>
        <dbReference type="ChEBI" id="CHEBI:456216"/>
        <dbReference type="EC" id="6.3.4.13"/>
    </reaction>
</comment>
<comment type="cofactor">
    <cofactor evidence="1">
        <name>Mg(2+)</name>
        <dbReference type="ChEBI" id="CHEBI:18420"/>
    </cofactor>
    <cofactor evidence="1">
        <name>Mn(2+)</name>
        <dbReference type="ChEBI" id="CHEBI:29035"/>
    </cofactor>
    <text evidence="1">Binds 1 Mg(2+) or Mn(2+) ion per subunit.</text>
</comment>
<comment type="pathway">
    <text evidence="2">Purine metabolism; IMP biosynthesis via de novo pathway; N(1)-(5-phospho-D-ribosyl)glycinamide from 5-phospho-alpha-D-ribose 1-diphosphate: step 2/2.</text>
</comment>
<comment type="similarity">
    <text evidence="2">Belongs to the GARS family.</text>
</comment>
<sequence length="429" mass="45872">MNILIIGNGGREHALAWKVAQSPMAEKVFVAPGNAGTALEEKVENVAISATDVEKLVAFAQANHIGLTIVGPEAPLVIGVVDAFRAAGLKIFGPTKAAAQLEGSKAFTKDFLARHHIPTAEYQNFTEVEPALAYLREKGAPIVVKADGLAAGKGVIVAMTLDEAEAAVKEMLSGNAFGEAGSRVVIEEFLDGEEASFIVMVDGKNVEPMATSQDHKRVGENDTGLNTGGMGAYSPAPVVTPEIHERIMQQVIYPTVNGMAAEGNIYTGFLYAGLMIMPNGQPKVIEFNCRFGDPETQPIMLRLESDLVELCLAACDGKLDQKKSQWCEQASLGIVLAAEGYPGDYRKGDEITGIESAVENQKVFLAGVENKDGKLVTNGGRVVCVTALGDTVYDAQQQALALAEQVKWTGRFYRRDIGYRAVAREKNNA</sequence>
<protein>
    <recommendedName>
        <fullName evidence="2">Phosphoribosylamine--glycine ligase</fullName>
        <ecNumber evidence="2">6.3.4.13</ecNumber>
    </recommendedName>
    <alternativeName>
        <fullName evidence="2">GARS</fullName>
    </alternativeName>
    <alternativeName>
        <fullName evidence="2">Glycinamide ribonucleotide synthetase</fullName>
    </alternativeName>
    <alternativeName>
        <fullName evidence="2">Phosphoribosylglycinamide synthetase</fullName>
    </alternativeName>
</protein>
<reference key="1">
    <citation type="journal article" date="2001" name="Proc. Natl. Acad. Sci. U.S.A.">
        <title>Complete genomic sequence of Pasteurella multocida Pm70.</title>
        <authorList>
            <person name="May B.J."/>
            <person name="Zhang Q."/>
            <person name="Li L.L."/>
            <person name="Paustian M.L."/>
            <person name="Whittam T.S."/>
            <person name="Kapur V."/>
        </authorList>
    </citation>
    <scope>NUCLEOTIDE SEQUENCE [LARGE SCALE GENOMIC DNA]</scope>
    <source>
        <strain>Pm70</strain>
    </source>
</reference>
<evidence type="ECO:0000250" key="1"/>
<evidence type="ECO:0000255" key="2">
    <source>
        <dbReference type="HAMAP-Rule" id="MF_00138"/>
    </source>
</evidence>
<evidence type="ECO:0000256" key="3">
    <source>
        <dbReference type="SAM" id="MobiDB-lite"/>
    </source>
</evidence>
<keyword id="KW-0067">ATP-binding</keyword>
<keyword id="KW-0436">Ligase</keyword>
<keyword id="KW-0460">Magnesium</keyword>
<keyword id="KW-0464">Manganese</keyword>
<keyword id="KW-0479">Metal-binding</keyword>
<keyword id="KW-0547">Nucleotide-binding</keyword>
<keyword id="KW-0658">Purine biosynthesis</keyword>
<keyword id="KW-1185">Reference proteome</keyword>
<feature type="chain" id="PRO_0000151468" description="Phosphoribosylamine--glycine ligase">
    <location>
        <begin position="1"/>
        <end position="429"/>
    </location>
</feature>
<feature type="domain" description="ATP-grasp" evidence="2">
    <location>
        <begin position="109"/>
        <end position="316"/>
    </location>
</feature>
<feature type="region of interest" description="Disordered" evidence="3">
    <location>
        <begin position="209"/>
        <end position="231"/>
    </location>
</feature>
<feature type="binding site" evidence="2">
    <location>
        <begin position="135"/>
        <end position="196"/>
    </location>
    <ligand>
        <name>ATP</name>
        <dbReference type="ChEBI" id="CHEBI:30616"/>
    </ligand>
</feature>
<feature type="binding site" evidence="2">
    <location>
        <position position="286"/>
    </location>
    <ligand>
        <name>Mg(2+)</name>
        <dbReference type="ChEBI" id="CHEBI:18420"/>
    </ligand>
</feature>
<feature type="binding site" evidence="2">
    <location>
        <position position="288"/>
    </location>
    <ligand>
        <name>Mg(2+)</name>
        <dbReference type="ChEBI" id="CHEBI:18420"/>
    </ligand>
</feature>
<organism>
    <name type="scientific">Pasteurella multocida (strain Pm70)</name>
    <dbReference type="NCBI Taxonomy" id="272843"/>
    <lineage>
        <taxon>Bacteria</taxon>
        <taxon>Pseudomonadati</taxon>
        <taxon>Pseudomonadota</taxon>
        <taxon>Gammaproteobacteria</taxon>
        <taxon>Pasteurellales</taxon>
        <taxon>Pasteurellaceae</taxon>
        <taxon>Pasteurella</taxon>
    </lineage>
</organism>
<gene>
    <name evidence="2" type="primary">purD</name>
    <name type="ordered locus">PM0224</name>
</gene>
<proteinExistence type="inferred from homology"/>